<sequence length="201" mass="23086">MFRTVNGEDYSPAVQQRNILDFGKAHSLLWTDNGSANDRCETGGNCRESGQDRVKRPMNAFIVWSRDQRRKVALENPQMQNSEISKRLGYDWKMLTEAEKQPFFEEAQRLRAMHRDKYPGYKYRPRRKAKEATEIASRRLFSTVQPNAHRGDVVSLPIQGRLRQGHTFTNGKPVKPLTAHEHKQLTPATGASQQLDKPAPQ</sequence>
<feature type="chain" id="PRO_0000048668" description="Sex-determining region Y protein">
    <location>
        <begin position="1"/>
        <end position="201"/>
    </location>
</feature>
<feature type="DNA-binding region" description="HMG box" evidence="3">
    <location>
        <begin position="54"/>
        <end position="122"/>
    </location>
</feature>
<feature type="region of interest" description="Disordered" evidence="4">
    <location>
        <begin position="164"/>
        <end position="201"/>
    </location>
</feature>
<feature type="compositionally biased region" description="Polar residues" evidence="4">
    <location>
        <begin position="186"/>
        <end position="195"/>
    </location>
</feature>
<name>SRY_GRAGR</name>
<proteinExistence type="inferred from homology"/>
<gene>
    <name type="primary">SRY</name>
    <name type="synonym">TDF</name>
</gene>
<keyword id="KW-0010">Activator</keyword>
<keyword id="KW-0112">Calmodulin-binding</keyword>
<keyword id="KW-0963">Cytoplasm</keyword>
<keyword id="KW-0221">Differentiation</keyword>
<keyword id="KW-0238">DNA-binding</keyword>
<keyword id="KW-0539">Nucleus</keyword>
<keyword id="KW-0678">Repressor</keyword>
<keyword id="KW-0726">Sexual differentiation</keyword>
<keyword id="KW-0804">Transcription</keyword>
<keyword id="KW-0805">Transcription regulation</keyword>
<dbReference type="EMBL" id="AB108524">
    <property type="protein sequence ID" value="BAC75656.1"/>
    <property type="molecule type" value="Genomic_DNA"/>
</dbReference>
<dbReference type="SMR" id="Q864P7"/>
<dbReference type="GO" id="GO:0005737">
    <property type="term" value="C:cytoplasm"/>
    <property type="evidence" value="ECO:0007669"/>
    <property type="project" value="UniProtKB-SubCell"/>
</dbReference>
<dbReference type="GO" id="GO:0016607">
    <property type="term" value="C:nuclear speck"/>
    <property type="evidence" value="ECO:0007669"/>
    <property type="project" value="UniProtKB-SubCell"/>
</dbReference>
<dbReference type="GO" id="GO:0005634">
    <property type="term" value="C:nucleus"/>
    <property type="evidence" value="ECO:0000250"/>
    <property type="project" value="UniProtKB"/>
</dbReference>
<dbReference type="GO" id="GO:0005516">
    <property type="term" value="F:calmodulin binding"/>
    <property type="evidence" value="ECO:0007669"/>
    <property type="project" value="UniProtKB-KW"/>
</dbReference>
<dbReference type="GO" id="GO:0001228">
    <property type="term" value="F:DNA-binding transcription activator activity, RNA polymerase II-specific"/>
    <property type="evidence" value="ECO:0007669"/>
    <property type="project" value="TreeGrafter"/>
</dbReference>
<dbReference type="GO" id="GO:0000978">
    <property type="term" value="F:RNA polymerase II cis-regulatory region sequence-specific DNA binding"/>
    <property type="evidence" value="ECO:0007669"/>
    <property type="project" value="TreeGrafter"/>
</dbReference>
<dbReference type="GO" id="GO:0030154">
    <property type="term" value="P:cell differentiation"/>
    <property type="evidence" value="ECO:0007669"/>
    <property type="project" value="UniProtKB-KW"/>
</dbReference>
<dbReference type="GO" id="GO:0030238">
    <property type="term" value="P:male sex determination"/>
    <property type="evidence" value="ECO:0007669"/>
    <property type="project" value="InterPro"/>
</dbReference>
<dbReference type="GO" id="GO:0007548">
    <property type="term" value="P:sex differentiation"/>
    <property type="evidence" value="ECO:0007669"/>
    <property type="project" value="UniProtKB-KW"/>
</dbReference>
<dbReference type="CDD" id="cd22034">
    <property type="entry name" value="HMG-box_SoxA_SRY"/>
    <property type="match status" value="1"/>
</dbReference>
<dbReference type="FunFam" id="1.10.30.10:FF:000002">
    <property type="entry name" value="transcription factor Sox-2"/>
    <property type="match status" value="1"/>
</dbReference>
<dbReference type="Gene3D" id="1.10.30.10">
    <property type="entry name" value="High mobility group box domain"/>
    <property type="match status" value="1"/>
</dbReference>
<dbReference type="InterPro" id="IPR009071">
    <property type="entry name" value="HMG_box_dom"/>
</dbReference>
<dbReference type="InterPro" id="IPR036910">
    <property type="entry name" value="HMG_box_dom_sf"/>
</dbReference>
<dbReference type="InterPro" id="IPR017253">
    <property type="entry name" value="SRY"/>
</dbReference>
<dbReference type="InterPro" id="IPR050140">
    <property type="entry name" value="SRY-related_HMG-box_TF-like"/>
</dbReference>
<dbReference type="PANTHER" id="PTHR10270:SF161">
    <property type="entry name" value="SEX-DETERMINING REGION Y PROTEIN"/>
    <property type="match status" value="1"/>
</dbReference>
<dbReference type="PANTHER" id="PTHR10270">
    <property type="entry name" value="SOX TRANSCRIPTION FACTOR"/>
    <property type="match status" value="1"/>
</dbReference>
<dbReference type="Pfam" id="PF00505">
    <property type="entry name" value="HMG_box"/>
    <property type="match status" value="1"/>
</dbReference>
<dbReference type="PIRSF" id="PIRSF037653">
    <property type="entry name" value="SRY"/>
    <property type="match status" value="1"/>
</dbReference>
<dbReference type="SMART" id="SM00398">
    <property type="entry name" value="HMG"/>
    <property type="match status" value="1"/>
</dbReference>
<dbReference type="SUPFAM" id="SSF47095">
    <property type="entry name" value="HMG-box"/>
    <property type="match status" value="1"/>
</dbReference>
<dbReference type="PROSITE" id="PS50118">
    <property type="entry name" value="HMG_BOX_2"/>
    <property type="match status" value="1"/>
</dbReference>
<accession>Q864P7</accession>
<evidence type="ECO:0000250" key="1">
    <source>
        <dbReference type="UniProtKB" id="P36394"/>
    </source>
</evidence>
<evidence type="ECO:0000250" key="2">
    <source>
        <dbReference type="UniProtKB" id="Q05066"/>
    </source>
</evidence>
<evidence type="ECO:0000255" key="3">
    <source>
        <dbReference type="PROSITE-ProRule" id="PRU00267"/>
    </source>
</evidence>
<evidence type="ECO:0000256" key="4">
    <source>
        <dbReference type="SAM" id="MobiDB-lite"/>
    </source>
</evidence>
<evidence type="ECO:0000305" key="5"/>
<comment type="function">
    <text evidence="1 2">Transcriptional regulator that controls a genetic switch in male development. It is necessary and sufficient for initiating male sex determination by directing the development of supporting cell precursors (pre-Sertoli cells) as Sertoli rather than granulosa cells. Involved in different aspects of gene regulation including promoter activation or repression. Binds to the DNA consensus sequence 5'-[AT]AACAA[AT]-3'. SRY HMG box recognizes DNA by partial intercalation in the minor groove and promotes DNA bending. Also involved in pre-mRNA splicing (By similarity). In male adult brain involved in the maintenance of motor functions of dopaminergic neurons (By similarity).</text>
</comment>
<comment type="subunit">
    <text evidence="2">Interacts with CALM, EP300, HDAC3, KPNB1, ZNF208 isoform KRAB-O, PARP1, SLC9A3R2 and WT1. The interaction with EP300 modulates its DNA-binding activity. The interaction with KPNB1 is sensitive to dissociation by Ran in the GTP-bound form. Interaction with PARP1 impaired its DNA-binding activity.</text>
</comment>
<comment type="subcellular location">
    <subcellularLocation>
        <location evidence="2">Nucleus speckle</location>
    </subcellularLocation>
    <subcellularLocation>
        <location evidence="2">Cytoplasm</location>
    </subcellularLocation>
    <subcellularLocation>
        <location evidence="2">Nucleus</location>
    </subcellularLocation>
</comment>
<comment type="similarity">
    <text evidence="5">Belongs to the SRY family.</text>
</comment>
<comment type="online information" name="Protein Spotlight">
    <link uri="https://www.proteinspotlight.org/back_issues/080"/>
    <text>The tenuous nature of sex - Issue 80 of March 2007</text>
</comment>
<protein>
    <recommendedName>
        <fullName>Sex-determining region Y protein</fullName>
    </recommendedName>
    <alternativeName>
        <fullName>Testis-determining factor</fullName>
    </alternativeName>
</protein>
<reference key="1">
    <citation type="journal article" date="2003" name="Mammal Study">
        <title>SRY gene structure and phylogeny in the cetacean species.</title>
        <authorList>
            <person name="Nishida S."/>
            <person name="Pastene L.A."/>
            <person name="Goto M."/>
            <person name="Koike H."/>
        </authorList>
    </citation>
    <scope>NUCLEOTIDE SEQUENCE [GENOMIC DNA]</scope>
</reference>
<organism>
    <name type="scientific">Grampus griseus</name>
    <name type="common">Risso's dolphin</name>
    <name type="synonym">Delphinus griseus</name>
    <dbReference type="NCBI Taxonomy" id="83653"/>
    <lineage>
        <taxon>Eukaryota</taxon>
        <taxon>Metazoa</taxon>
        <taxon>Chordata</taxon>
        <taxon>Craniata</taxon>
        <taxon>Vertebrata</taxon>
        <taxon>Euteleostomi</taxon>
        <taxon>Mammalia</taxon>
        <taxon>Eutheria</taxon>
        <taxon>Laurasiatheria</taxon>
        <taxon>Artiodactyla</taxon>
        <taxon>Whippomorpha</taxon>
        <taxon>Cetacea</taxon>
        <taxon>Odontoceti</taxon>
        <taxon>Delphinidae</taxon>
        <taxon>Grampus</taxon>
    </lineage>
</organism>